<comment type="catalytic activity">
    <reaction>
        <text>dUMP + (6R)-5,10-methylene-5,6,7,8-tetrahydrofolate = 7,8-dihydrofolate + dTMP</text>
        <dbReference type="Rhea" id="RHEA:12104"/>
        <dbReference type="ChEBI" id="CHEBI:15636"/>
        <dbReference type="ChEBI" id="CHEBI:57451"/>
        <dbReference type="ChEBI" id="CHEBI:63528"/>
        <dbReference type="ChEBI" id="CHEBI:246422"/>
        <dbReference type="EC" id="2.1.1.45"/>
    </reaction>
</comment>
<comment type="pathway">
    <text>Pyrimidine metabolism; dTTP biosynthesis.</text>
</comment>
<comment type="subunit">
    <text evidence="1">Homodimer.</text>
</comment>
<comment type="similarity">
    <text evidence="3">Belongs to the thymidylate synthase family.</text>
</comment>
<reference key="1">
    <citation type="journal article" date="1994" name="Gene">
        <title>Cloning, expression and characterization of thymidylate synthase from Cryptococcus neoformans.</title>
        <authorList>
            <person name="Livi L.L."/>
            <person name="Edman U."/>
            <person name="Schneider G.P."/>
            <person name="Greene P.J."/>
            <person name="Santi D.V."/>
        </authorList>
    </citation>
    <scope>NUCLEOTIDE SEQUENCE [GENOMIC DNA]</scope>
    <source>
        <strain>B-3501</strain>
    </source>
</reference>
<reference key="2">
    <citation type="journal article" date="2005" name="Science">
        <title>The genome of the basidiomycetous yeast and human pathogen Cryptococcus neoformans.</title>
        <authorList>
            <person name="Loftus B.J."/>
            <person name="Fung E."/>
            <person name="Roncaglia P."/>
            <person name="Rowley D."/>
            <person name="Amedeo P."/>
            <person name="Bruno D."/>
            <person name="Vamathevan J."/>
            <person name="Miranda M."/>
            <person name="Anderson I.J."/>
            <person name="Fraser J.A."/>
            <person name="Allen J.E."/>
            <person name="Bosdet I.E."/>
            <person name="Brent M.R."/>
            <person name="Chiu R."/>
            <person name="Doering T.L."/>
            <person name="Donlin M.J."/>
            <person name="D'Souza C.A."/>
            <person name="Fox D.S."/>
            <person name="Grinberg V."/>
            <person name="Fu J."/>
            <person name="Fukushima M."/>
            <person name="Haas B.J."/>
            <person name="Huang J.C."/>
            <person name="Janbon G."/>
            <person name="Jones S.J.M."/>
            <person name="Koo H.L."/>
            <person name="Krzywinski M.I."/>
            <person name="Kwon-Chung K.J."/>
            <person name="Lengeler K.B."/>
            <person name="Maiti R."/>
            <person name="Marra M.A."/>
            <person name="Marra R.E."/>
            <person name="Mathewson C.A."/>
            <person name="Mitchell T.G."/>
            <person name="Pertea M."/>
            <person name="Riggs F.R."/>
            <person name="Salzberg S.L."/>
            <person name="Schein J.E."/>
            <person name="Shvartsbeyn A."/>
            <person name="Shin H."/>
            <person name="Shumway M."/>
            <person name="Specht C.A."/>
            <person name="Suh B.B."/>
            <person name="Tenney A."/>
            <person name="Utterback T.R."/>
            <person name="Wickes B.L."/>
            <person name="Wortman J.R."/>
            <person name="Wye N.H."/>
            <person name="Kronstad J.W."/>
            <person name="Lodge J.K."/>
            <person name="Heitman J."/>
            <person name="Davis R.W."/>
            <person name="Fraser C.M."/>
            <person name="Hyman R.W."/>
        </authorList>
    </citation>
    <scope>NUCLEOTIDE SEQUENCE [LARGE SCALE GENOMIC DNA]</scope>
    <source>
        <strain>B-3501A</strain>
    </source>
</reference>
<evidence type="ECO:0000250" key="1"/>
<evidence type="ECO:0000250" key="2">
    <source>
        <dbReference type="UniProtKB" id="P0A884"/>
    </source>
</evidence>
<evidence type="ECO:0000305" key="3"/>
<feature type="chain" id="PRO_0000410319" description="Thymidylate synthase">
    <location>
        <begin position="1"/>
        <end position="317"/>
    </location>
</feature>
<feature type="active site" description="Nucleophile" evidence="2">
    <location>
        <position position="187"/>
    </location>
</feature>
<feature type="binding site" description="in other chain" evidence="2">
    <location>
        <position position="40"/>
    </location>
    <ligand>
        <name>dUMP</name>
        <dbReference type="ChEBI" id="CHEBI:246422"/>
        <note>ligand shared between dimeric partners</note>
    </ligand>
</feature>
<feature type="binding site" evidence="2">
    <location>
        <begin position="167"/>
        <end position="168"/>
    </location>
    <ligand>
        <name>dUMP</name>
        <dbReference type="ChEBI" id="CHEBI:246422"/>
        <note>ligand shared between dimeric partners</note>
    </ligand>
</feature>
<feature type="binding site" description="in other chain" evidence="2">
    <location>
        <begin position="216"/>
        <end position="219"/>
    </location>
    <ligand>
        <name>dUMP</name>
        <dbReference type="ChEBI" id="CHEBI:246422"/>
        <note>ligand shared between dimeric partners</note>
    </ligand>
</feature>
<feature type="binding site" evidence="2">
    <location>
        <position position="219"/>
    </location>
    <ligand>
        <name>(6R)-5,10-methylene-5,6,7,8-tetrahydrofolate</name>
        <dbReference type="ChEBI" id="CHEBI:15636"/>
    </ligand>
</feature>
<feature type="binding site" description="in other chain" evidence="2">
    <location>
        <position position="227"/>
    </location>
    <ligand>
        <name>dUMP</name>
        <dbReference type="ChEBI" id="CHEBI:246422"/>
        <note>ligand shared between dimeric partners</note>
    </ligand>
</feature>
<feature type="binding site" description="in other chain" evidence="2">
    <location>
        <begin position="257"/>
        <end position="259"/>
    </location>
    <ligand>
        <name>dUMP</name>
        <dbReference type="ChEBI" id="CHEBI:246422"/>
        <note>ligand shared between dimeric partners</note>
    </ligand>
</feature>
<dbReference type="EC" id="2.1.1.45"/>
<dbReference type="EMBL" id="U12256">
    <property type="protein sequence ID" value="AAC48931.1"/>
    <property type="molecule type" value="Genomic_DNA"/>
</dbReference>
<dbReference type="EMBL" id="AAEY01000050">
    <property type="protein sequence ID" value="EAL18300.1"/>
    <property type="molecule type" value="Genomic_DNA"/>
</dbReference>
<dbReference type="RefSeq" id="XP_772947.1">
    <property type="nucleotide sequence ID" value="XM_767854.1"/>
</dbReference>
<dbReference type="SMR" id="P0CS13"/>
<dbReference type="BindingDB" id="P0CS13"/>
<dbReference type="ChEMBL" id="CHEMBL4665"/>
<dbReference type="DrugCentral" id="P0CS13"/>
<dbReference type="EnsemblFungi" id="AAW45984">
    <property type="protein sequence ID" value="AAW45984"/>
    <property type="gene ID" value="CNJ01230"/>
</dbReference>
<dbReference type="GeneID" id="4938566"/>
<dbReference type="KEGG" id="cnb:CNBJ2230"/>
<dbReference type="VEuPathDB" id="FungiDB:CNBJ2230"/>
<dbReference type="HOGENOM" id="CLU_021669_0_2_1"/>
<dbReference type="OrthoDB" id="439at5206"/>
<dbReference type="BRENDA" id="2.1.1.45">
    <property type="organism ID" value="1723"/>
</dbReference>
<dbReference type="UniPathway" id="UPA00575"/>
<dbReference type="PRO" id="PR:P0CS13"/>
<dbReference type="GO" id="GO:0005829">
    <property type="term" value="C:cytosol"/>
    <property type="evidence" value="ECO:0007669"/>
    <property type="project" value="TreeGrafter"/>
</dbReference>
<dbReference type="GO" id="GO:0005739">
    <property type="term" value="C:mitochondrion"/>
    <property type="evidence" value="ECO:0007669"/>
    <property type="project" value="TreeGrafter"/>
</dbReference>
<dbReference type="GO" id="GO:0004799">
    <property type="term" value="F:thymidylate synthase activity"/>
    <property type="evidence" value="ECO:0007669"/>
    <property type="project" value="UniProtKB-EC"/>
</dbReference>
<dbReference type="GO" id="GO:0006231">
    <property type="term" value="P:dTMP biosynthetic process"/>
    <property type="evidence" value="ECO:0007669"/>
    <property type="project" value="InterPro"/>
</dbReference>
<dbReference type="GO" id="GO:0006235">
    <property type="term" value="P:dTTP biosynthetic process"/>
    <property type="evidence" value="ECO:0007669"/>
    <property type="project" value="UniProtKB-UniPathway"/>
</dbReference>
<dbReference type="GO" id="GO:0032259">
    <property type="term" value="P:methylation"/>
    <property type="evidence" value="ECO:0007669"/>
    <property type="project" value="UniProtKB-KW"/>
</dbReference>
<dbReference type="CDD" id="cd00351">
    <property type="entry name" value="TS_Pyrimidine_HMase"/>
    <property type="match status" value="1"/>
</dbReference>
<dbReference type="FunFam" id="3.30.572.10:FF:000012">
    <property type="entry name" value="Thymidylate synthase"/>
    <property type="match status" value="1"/>
</dbReference>
<dbReference type="Gene3D" id="3.30.572.10">
    <property type="entry name" value="Thymidylate synthase/dCMP hydroxymethylase domain"/>
    <property type="match status" value="1"/>
</dbReference>
<dbReference type="HAMAP" id="MF_00008">
    <property type="entry name" value="Thymidy_synth_bact"/>
    <property type="match status" value="1"/>
</dbReference>
<dbReference type="InterPro" id="IPR045097">
    <property type="entry name" value="Thymidate_synth/dCMP_Mease"/>
</dbReference>
<dbReference type="InterPro" id="IPR023451">
    <property type="entry name" value="Thymidate_synth/dCMP_Mease_dom"/>
</dbReference>
<dbReference type="InterPro" id="IPR036926">
    <property type="entry name" value="Thymidate_synth/dCMP_Mease_sf"/>
</dbReference>
<dbReference type="InterPro" id="IPR000398">
    <property type="entry name" value="Thymidylate_synthase"/>
</dbReference>
<dbReference type="InterPro" id="IPR020940">
    <property type="entry name" value="Thymidylate_synthase_AS"/>
</dbReference>
<dbReference type="NCBIfam" id="TIGR03284">
    <property type="entry name" value="thym_sym"/>
    <property type="match status" value="1"/>
</dbReference>
<dbReference type="PANTHER" id="PTHR11548:SF2">
    <property type="entry name" value="THYMIDYLATE SYNTHASE"/>
    <property type="match status" value="1"/>
</dbReference>
<dbReference type="PANTHER" id="PTHR11548">
    <property type="entry name" value="THYMIDYLATE SYNTHASE 1"/>
    <property type="match status" value="1"/>
</dbReference>
<dbReference type="Pfam" id="PF00303">
    <property type="entry name" value="Thymidylat_synt"/>
    <property type="match status" value="1"/>
</dbReference>
<dbReference type="PRINTS" id="PR00108">
    <property type="entry name" value="THYMDSNTHASE"/>
</dbReference>
<dbReference type="SUPFAM" id="SSF55831">
    <property type="entry name" value="Thymidylate synthase/dCMP hydroxymethylase"/>
    <property type="match status" value="1"/>
</dbReference>
<dbReference type="PROSITE" id="PS00091">
    <property type="entry name" value="THYMIDYLATE_SYNTHASE"/>
    <property type="match status" value="1"/>
</dbReference>
<accession>P0CS13</accession>
<accession>P45351</accession>
<accession>Q55KW0</accession>
<accession>Q5KAL9</accession>
<organism>
    <name type="scientific">Cryptococcus neoformans var. neoformans serotype D (strain B-3501A)</name>
    <name type="common">Filobasidiella neoformans</name>
    <dbReference type="NCBI Taxonomy" id="283643"/>
    <lineage>
        <taxon>Eukaryota</taxon>
        <taxon>Fungi</taxon>
        <taxon>Dikarya</taxon>
        <taxon>Basidiomycota</taxon>
        <taxon>Agaricomycotina</taxon>
        <taxon>Tremellomycetes</taxon>
        <taxon>Tremellales</taxon>
        <taxon>Cryptococcaceae</taxon>
        <taxon>Cryptococcus</taxon>
        <taxon>Cryptococcus neoformans species complex</taxon>
    </lineage>
</organism>
<proteinExistence type="inferred from homology"/>
<name>TYSY_CRYNB</name>
<gene>
    <name type="primary">TMP1</name>
    <name type="ordered locus">CNBJ2230</name>
</gene>
<sequence>MTATIDDQEKNQRSNPDHEEYQYLDLIRRIINVGEVRPDRTGTGTVALFAPPSFRFSLADNTLPLLTTKRVFLRGVIAELLWFVSGCTDAKMLSSQGVGIWDGNGSKEFLEKVGLGHRREGDLGPVYGFQWRHFGAEYTDADGDYKGKGVDQLQRVIDTIKNNPTDRRIILSAWNPKDLPLMALPPCHMFCQFFVSLPPADSPGSKPKLSCLMYQRSCDLGLGVPFNIASYALLTHMIALITDTEPHEFILQMGDAHVYRDHVEPLKTQLEREPRDFPKLKWARSKEEIGDIDGFKVEDFVVEGYKPWGKIDMKMSA</sequence>
<protein>
    <recommendedName>
        <fullName>Thymidylate synthase</fullName>
        <shortName>TS</shortName>
        <shortName>TSase</shortName>
        <ecNumber>2.1.1.45</ecNumber>
    </recommendedName>
</protein>
<keyword id="KW-0489">Methyltransferase</keyword>
<keyword id="KW-0545">Nucleotide biosynthesis</keyword>
<keyword id="KW-0808">Transferase</keyword>